<feature type="chain" id="PRO_0000457061" description="MFS-type transporter opdF">
    <location>
        <begin position="1"/>
        <end position="424"/>
    </location>
</feature>
<feature type="transmembrane region" description="Helical" evidence="1">
    <location>
        <begin position="36"/>
        <end position="56"/>
    </location>
</feature>
<feature type="transmembrane region" description="Helical" evidence="1">
    <location>
        <begin position="102"/>
        <end position="122"/>
    </location>
</feature>
<feature type="transmembrane region" description="Helical" evidence="1">
    <location>
        <begin position="127"/>
        <end position="147"/>
    </location>
</feature>
<feature type="transmembrane region" description="Helical" evidence="1">
    <location>
        <begin position="160"/>
        <end position="180"/>
    </location>
</feature>
<feature type="transmembrane region" description="Helical" evidence="1">
    <location>
        <begin position="187"/>
        <end position="207"/>
    </location>
</feature>
<feature type="transmembrane region" description="Helical" evidence="1">
    <location>
        <begin position="239"/>
        <end position="259"/>
    </location>
</feature>
<feature type="transmembrane region" description="Helical" evidence="1">
    <location>
        <begin position="265"/>
        <end position="285"/>
    </location>
</feature>
<feature type="transmembrane region" description="Helical" evidence="1">
    <location>
        <begin position="299"/>
        <end position="319"/>
    </location>
</feature>
<feature type="transmembrane region" description="Helical" evidence="1">
    <location>
        <begin position="329"/>
        <end position="349"/>
    </location>
</feature>
<feature type="transmembrane region" description="Helical" evidence="1">
    <location>
        <begin position="364"/>
        <end position="384"/>
    </location>
</feature>
<feature type="transmembrane region" description="Helical" evidence="1">
    <location>
        <begin position="391"/>
        <end position="411"/>
    </location>
</feature>
<feature type="region of interest" description="Disordered" evidence="3">
    <location>
        <begin position="1"/>
        <end position="23"/>
    </location>
</feature>
<feature type="compositionally biased region" description="Basic and acidic residues" evidence="3">
    <location>
        <begin position="1"/>
        <end position="10"/>
    </location>
</feature>
<feature type="glycosylation site" description="N-linked (GlcNAc...) asparagine" evidence="2">
    <location>
        <position position="208"/>
    </location>
</feature>
<evidence type="ECO:0000255" key="1"/>
<evidence type="ECO:0000255" key="2">
    <source>
        <dbReference type="PROSITE-ProRule" id="PRU00498"/>
    </source>
</evidence>
<evidence type="ECO:0000256" key="3">
    <source>
        <dbReference type="SAM" id="MobiDB-lite"/>
    </source>
</evidence>
<evidence type="ECO:0000269" key="4">
    <source>
    </source>
</evidence>
<evidence type="ECO:0000303" key="5">
    <source>
    </source>
</evidence>
<evidence type="ECO:0000305" key="6"/>
<reference key="1">
    <citation type="journal article" date="2013" name="PLoS ONE">
        <title>Genomic and secretomic analyses reveal unique features of the lignocellulolytic enzyme system of Penicillium decumbens.</title>
        <authorList>
            <person name="Liu G."/>
            <person name="Zhang L."/>
            <person name="Wei X."/>
            <person name="Zou G."/>
            <person name="Qin Y."/>
            <person name="Ma L."/>
            <person name="Li J."/>
            <person name="Zheng H."/>
            <person name="Wang S."/>
            <person name="Wang C."/>
            <person name="Xun L."/>
            <person name="Zhao G.-P."/>
            <person name="Zhou Z."/>
            <person name="Qu Y."/>
        </authorList>
    </citation>
    <scope>NUCLEOTIDE SEQUENCE [LARGE SCALE GENOMIC DNA]</scope>
    <source>
        <strain>114-2 / CGMCC 5302</strain>
    </source>
</reference>
<reference key="2">
    <citation type="journal article" date="2022" name="Mar. Drugs">
        <title>Identification of PKS-NRPS Hybrid Metabolites in Marine-Derived Penicillium oxalicum.</title>
        <authorList>
            <person name="Li H."/>
            <person name="Zhang W."/>
            <person name="Zhang X."/>
            <person name="Tang S."/>
            <person name="Men P."/>
            <person name="Xiong M."/>
            <person name="Li Z."/>
            <person name="Zhang Y."/>
            <person name="Huang X."/>
            <person name="Lu X."/>
        </authorList>
    </citation>
    <scope>FUNCTION</scope>
    <scope>DISRUPTION PHENOTYPE</scope>
</reference>
<accession>S7Z7Z3</accession>
<organism>
    <name type="scientific">Penicillium oxalicum (strain 114-2 / CGMCC 5302)</name>
    <name type="common">Penicillium decumbens</name>
    <dbReference type="NCBI Taxonomy" id="933388"/>
    <lineage>
        <taxon>Eukaryota</taxon>
        <taxon>Fungi</taxon>
        <taxon>Dikarya</taxon>
        <taxon>Ascomycota</taxon>
        <taxon>Pezizomycotina</taxon>
        <taxon>Eurotiomycetes</taxon>
        <taxon>Eurotiomycetidae</taxon>
        <taxon>Eurotiales</taxon>
        <taxon>Aspergillaceae</taxon>
        <taxon>Penicillium</taxon>
    </lineage>
</organism>
<proteinExistence type="inferred from homology"/>
<gene>
    <name evidence="5" type="primary">opdF</name>
    <name type="ORF">PDE_01230</name>
</gene>
<dbReference type="EMBL" id="KB644408">
    <property type="protein sequence ID" value="EPS26294.1"/>
    <property type="molecule type" value="Genomic_DNA"/>
</dbReference>
<dbReference type="SMR" id="S7Z7Z3"/>
<dbReference type="STRING" id="933388.S7Z7Z3"/>
<dbReference type="eggNOG" id="KOG2504">
    <property type="taxonomic scope" value="Eukaryota"/>
</dbReference>
<dbReference type="HOGENOM" id="CLU_001265_1_0_1"/>
<dbReference type="OrthoDB" id="5667at2759"/>
<dbReference type="PhylomeDB" id="S7Z7Z3"/>
<dbReference type="Proteomes" id="UP000019376">
    <property type="component" value="Unassembled WGS sequence"/>
</dbReference>
<dbReference type="GO" id="GO:0016020">
    <property type="term" value="C:membrane"/>
    <property type="evidence" value="ECO:0007669"/>
    <property type="project" value="UniProtKB-SubCell"/>
</dbReference>
<dbReference type="GO" id="GO:0022857">
    <property type="term" value="F:transmembrane transporter activity"/>
    <property type="evidence" value="ECO:0007669"/>
    <property type="project" value="InterPro"/>
</dbReference>
<dbReference type="CDD" id="cd17352">
    <property type="entry name" value="MFS_MCT_SLC16"/>
    <property type="match status" value="1"/>
</dbReference>
<dbReference type="Gene3D" id="1.20.1250.20">
    <property type="entry name" value="MFS general substrate transporter like domains"/>
    <property type="match status" value="2"/>
</dbReference>
<dbReference type="InterPro" id="IPR011701">
    <property type="entry name" value="MFS"/>
</dbReference>
<dbReference type="InterPro" id="IPR020846">
    <property type="entry name" value="MFS_dom"/>
</dbReference>
<dbReference type="InterPro" id="IPR036259">
    <property type="entry name" value="MFS_trans_sf"/>
</dbReference>
<dbReference type="InterPro" id="IPR050327">
    <property type="entry name" value="Proton-linked_MCT"/>
</dbReference>
<dbReference type="PANTHER" id="PTHR11360:SF224">
    <property type="entry name" value="MAJOR FACILITATOR SUPERFAMILY (MFS) PROFILE DOMAIN-CONTAINING PROTEIN-RELATED"/>
    <property type="match status" value="1"/>
</dbReference>
<dbReference type="PANTHER" id="PTHR11360">
    <property type="entry name" value="MONOCARBOXYLATE TRANSPORTER"/>
    <property type="match status" value="1"/>
</dbReference>
<dbReference type="Pfam" id="PF07690">
    <property type="entry name" value="MFS_1"/>
    <property type="match status" value="1"/>
</dbReference>
<dbReference type="SUPFAM" id="SSF103473">
    <property type="entry name" value="MFS general substrate transporter"/>
    <property type="match status" value="1"/>
</dbReference>
<dbReference type="PROSITE" id="PS50850">
    <property type="entry name" value="MFS"/>
    <property type="match status" value="1"/>
</dbReference>
<comment type="function">
    <text evidence="4">MFS-type transporter; part of the gene cluster that mediates the biosynthesis of oxopyrrolidines, polyketide-amino acid hybrid compounds with feature structures of tetramic acid.</text>
</comment>
<comment type="subcellular location">
    <subcellularLocation>
        <location evidence="1">Membrane</location>
        <topology evidence="1">Multi-pass membrane protein</topology>
    </subcellularLocation>
</comment>
<comment type="disruption phenotype">
    <text evidence="4">Does not affect the production of oxopyrrolidines A and B.</text>
</comment>
<comment type="similarity">
    <text evidence="6">Belongs to the major facilitator superfamily. Monocarboxylate porter (TC 2.A.1.13) family.</text>
</comment>
<protein>
    <recommendedName>
        <fullName evidence="5">MFS-type transporter opdF</fullName>
    </recommendedName>
    <alternativeName>
        <fullName evidence="5">Oxopyrrolidines biosynthesis cluster protein F</fullName>
    </alternativeName>
</protein>
<sequence>MSDTSLEKGNEGPTAEAPKVAPPTVPDGGLQAWLTVAGASVALFVSFGWVNCIALFQSEYQTNQLKGYSSSDVSWITSMEFFFMLSTSPVSGRLFDSYGPHVPIAIGSFLHVFGLMMASLSTKYYQLMLSQSVVSGIGSSLIFTPAMTAPQTWFRQKRGIVGGLTVAGSSLGGVVFPLMVQHLLPQVGFGWTMRICAFMILGLLVFANVTISSNFEHKPRPFSVIHYIGPLRDTNFVLLCVASFFMYWGIFIPFDYIVVEAIHYGMSTQMAWSLVPILNGASFFGRTVPNYIADKAGRFNVMIVMTTLSAILVLALWLPARGNGALITFAALFGITSGAIIGLGPVLIVQISPMSELGYRVGTVLAFAAVGTLTSPPIGGAIAASDGGSYTYTCVFSGVSFLIGTLGLAALRVRLSGWGLTTKI</sequence>
<name>OPDF_PENO1</name>
<keyword id="KW-0325">Glycoprotein</keyword>
<keyword id="KW-0472">Membrane</keyword>
<keyword id="KW-1185">Reference proteome</keyword>
<keyword id="KW-0812">Transmembrane</keyword>
<keyword id="KW-1133">Transmembrane helix</keyword>
<keyword id="KW-0813">Transport</keyword>